<proteinExistence type="evidence at protein level"/>
<feature type="transit peptide" description="Chloroplast" evidence="1">
    <location>
        <begin position="1"/>
        <end position="85"/>
    </location>
</feature>
<feature type="chain" id="PRO_0000035707" description="Triose phosphate/phosphate translocator, chloroplastic">
    <location>
        <begin position="86"/>
        <end position="409"/>
    </location>
</feature>
<feature type="topological domain" description="Chloroplast intermembrane" evidence="1">
    <location>
        <begin position="86"/>
        <end position="104"/>
    </location>
</feature>
<feature type="transmembrane region" description="Helical" evidence="1">
    <location>
        <begin position="105"/>
        <end position="125"/>
    </location>
</feature>
<feature type="topological domain" description="Lumenal" evidence="1">
    <location>
        <begin position="126"/>
        <end position="137"/>
    </location>
</feature>
<feature type="transmembrane region" description="Helical" evidence="1">
    <location>
        <begin position="138"/>
        <end position="158"/>
    </location>
</feature>
<feature type="topological domain" description="Chloroplast intermembrane" evidence="1">
    <location>
        <begin position="159"/>
        <end position="215"/>
    </location>
</feature>
<feature type="transmembrane region" description="Helical" evidence="1">
    <location>
        <begin position="216"/>
        <end position="236"/>
    </location>
</feature>
<feature type="topological domain" description="Lumenal" evidence="1">
    <location>
        <begin position="237"/>
        <end position="280"/>
    </location>
</feature>
<feature type="transmembrane region" description="Helical" evidence="1">
    <location>
        <begin position="281"/>
        <end position="300"/>
    </location>
</feature>
<feature type="topological domain" description="Chloroplast intermembrane" evidence="1">
    <location>
        <begin position="301"/>
        <end position="378"/>
    </location>
</feature>
<feature type="transmembrane region" description="Helical" evidence="1">
    <location>
        <begin position="379"/>
        <end position="399"/>
    </location>
</feature>
<feature type="topological domain" description="Lumenal" evidence="1">
    <location>
        <begin position="400"/>
        <end position="409"/>
    </location>
</feature>
<feature type="site" description="May be essential for binding and transport of phosphoenolpyruvate">
    <location>
        <position position="225"/>
    </location>
</feature>
<reference key="1">
    <citation type="journal article" date="1994" name="Plant J.">
        <title>Cloning and in vivo expression of functional triose phosphate/phosphate translocators from C3- and C4-plants: evidence for the putative participation of specific amino acid residues in the recognition of phosphoenolpyruvate.</title>
        <authorList>
            <person name="Fischer K."/>
            <person name="Arbinger B."/>
            <person name="Kammerer B."/>
            <person name="Busch C."/>
            <person name="Brink S."/>
            <person name="Wallmeier H."/>
            <person name="Sauer N."/>
            <person name="Eckerskorn C."/>
            <person name="Fluegge U.-I."/>
        </authorList>
    </citation>
    <scope>NUCLEOTIDE SEQUENCE [MRNA]</scope>
    <scope>PROTEIN SEQUENCE OF 305-316</scope>
    <source>
        <tissue>Leaf</tissue>
    </source>
</reference>
<gene>
    <name type="primary">TPT</name>
</gene>
<comment type="function">
    <text>Mediates the export of fixed carbons from the chloroplasts into the cytosol in the form of triose phosphates. In addition, it can also bind and transport phosphoenolpyruvate, thereby increasing the photosynthetic efficiency of C4-plants.</text>
</comment>
<comment type="subunit">
    <text>Homodimer.</text>
</comment>
<comment type="subcellular location">
    <subcellularLocation>
        <location>Plastid</location>
        <location>Chloroplast membrane</location>
        <topology>Multi-pass membrane protein</topology>
    </subcellularLocation>
    <text>Located in zones of contact between the inner and outer membrane of the chloroplast.</text>
</comment>
<comment type="similarity">
    <text evidence="2">Belongs to the TPT transporter family. TPT (TC 2.A.7.9) subfamily.</text>
</comment>
<sequence>MSALGTLSGGAAGVSGLLRLRRRAAPAPAIAAPSHLPAGTVKCAAAVPDAAPIVWGRQLRPALLLPAALLPSLQPARRHTLQPPAAAAESAGEAKSVGFLEKYPALVTGFFFFMWYFLNVIFNILNKKIYNYFPYPYFVSLIHLVVGVVYCLISWSVGLPKRAPINGTLLKLLFPVALCHGIGHITSNVSFAAVAVSFAHTIKALEPFFSAAATQFILGQQVPFSLWLSLAPVVIGVSMASLTELSFNWTGFINAMISNISFTYRSIYSKKAMTDMDSTNVYAYISIIALIVCIPPALIFEGPKLMQHGFSDAIAKVGLTKFVSDLFLVGLFYHLYNQIATNTLERVAPLTHAVGNVLKRVFVIGFSIIVFGNKISTQTGIGTSIAIAGVAMYSYIKAKIEEEKRKKSA</sequence>
<accession>P49133</accession>
<dbReference type="EMBL" id="Z26595">
    <property type="protein sequence ID" value="CAA81349.1"/>
    <property type="molecule type" value="mRNA"/>
</dbReference>
<dbReference type="PIR" id="S37497">
    <property type="entry name" value="S37497"/>
</dbReference>
<dbReference type="RefSeq" id="NP_001105497.1">
    <property type="nucleotide sequence ID" value="NM_001112027.1"/>
</dbReference>
<dbReference type="SMR" id="P49133"/>
<dbReference type="FunCoup" id="P49133">
    <property type="interactions" value="3128"/>
</dbReference>
<dbReference type="STRING" id="4577.P49133"/>
<dbReference type="TCDB" id="2.A.7.9.1">
    <property type="family name" value="the drug/metabolite transporter (dmt) superfamily"/>
</dbReference>
<dbReference type="PaxDb" id="4577-GRMZM2G070605_P01"/>
<dbReference type="EnsemblPlants" id="Zm00001eb118870_T001">
    <property type="protein sequence ID" value="Zm00001eb118870_P001"/>
    <property type="gene ID" value="Zm00001eb118870"/>
</dbReference>
<dbReference type="GeneID" id="542473"/>
<dbReference type="Gramene" id="Zm00001eb118870_T001">
    <property type="protein sequence ID" value="Zm00001eb118870_P001"/>
    <property type="gene ID" value="Zm00001eb118870"/>
</dbReference>
<dbReference type="KEGG" id="zma:542473"/>
<dbReference type="MaizeGDB" id="86189"/>
<dbReference type="eggNOG" id="KOG1441">
    <property type="taxonomic scope" value="Eukaryota"/>
</dbReference>
<dbReference type="InParanoid" id="P49133"/>
<dbReference type="OMA" id="PCVRQNF"/>
<dbReference type="OrthoDB" id="6418713at2759"/>
<dbReference type="Proteomes" id="UP000007305">
    <property type="component" value="Chromosome 3"/>
</dbReference>
<dbReference type="ExpressionAtlas" id="P49133">
    <property type="expression patterns" value="baseline and differential"/>
</dbReference>
<dbReference type="GO" id="GO:0031969">
    <property type="term" value="C:chloroplast membrane"/>
    <property type="evidence" value="ECO:0007669"/>
    <property type="project" value="UniProtKB-SubCell"/>
</dbReference>
<dbReference type="GO" id="GO:0005794">
    <property type="term" value="C:Golgi apparatus"/>
    <property type="evidence" value="ECO:0000318"/>
    <property type="project" value="GO_Central"/>
</dbReference>
<dbReference type="GO" id="GO:0015297">
    <property type="term" value="F:antiporter activity"/>
    <property type="evidence" value="ECO:0000318"/>
    <property type="project" value="GO_Central"/>
</dbReference>
<dbReference type="GO" id="GO:0046943">
    <property type="term" value="F:carboxylic acid transmembrane transporter activity"/>
    <property type="evidence" value="ECO:0007669"/>
    <property type="project" value="UniProtKB-ARBA"/>
</dbReference>
<dbReference type="GO" id="GO:0015605">
    <property type="term" value="F:organophosphate ester transmembrane transporter activity"/>
    <property type="evidence" value="ECO:0007669"/>
    <property type="project" value="UniProtKB-ARBA"/>
</dbReference>
<dbReference type="GO" id="GO:0015718">
    <property type="term" value="P:monocarboxylic acid transport"/>
    <property type="evidence" value="ECO:0007669"/>
    <property type="project" value="UniProtKB-ARBA"/>
</dbReference>
<dbReference type="GO" id="GO:0055085">
    <property type="term" value="P:transmembrane transport"/>
    <property type="evidence" value="ECO:0000318"/>
    <property type="project" value="GO_Central"/>
</dbReference>
<dbReference type="InterPro" id="IPR004853">
    <property type="entry name" value="Sugar_P_trans_dom"/>
</dbReference>
<dbReference type="InterPro" id="IPR004696">
    <property type="entry name" value="Tpt_PEP_transl"/>
</dbReference>
<dbReference type="InterPro" id="IPR050186">
    <property type="entry name" value="TPT_transporter"/>
</dbReference>
<dbReference type="NCBIfam" id="TIGR00817">
    <property type="entry name" value="tpt"/>
    <property type="match status" value="1"/>
</dbReference>
<dbReference type="PANTHER" id="PTHR11132">
    <property type="entry name" value="SOLUTE CARRIER FAMILY 35"/>
    <property type="match status" value="1"/>
</dbReference>
<dbReference type="Pfam" id="PF03151">
    <property type="entry name" value="TPT"/>
    <property type="match status" value="1"/>
</dbReference>
<dbReference type="SUPFAM" id="SSF103481">
    <property type="entry name" value="Multidrug resistance efflux transporter EmrE"/>
    <property type="match status" value="1"/>
</dbReference>
<keyword id="KW-0150">Chloroplast</keyword>
<keyword id="KW-0903">Direct protein sequencing</keyword>
<keyword id="KW-0472">Membrane</keyword>
<keyword id="KW-0934">Plastid</keyword>
<keyword id="KW-1185">Reference proteome</keyword>
<keyword id="KW-0809">Transit peptide</keyword>
<keyword id="KW-0812">Transmembrane</keyword>
<keyword id="KW-1133">Transmembrane helix</keyword>
<keyword id="KW-0813">Transport</keyword>
<name>TPT_MAIZE</name>
<evidence type="ECO:0000255" key="1"/>
<evidence type="ECO:0000305" key="2"/>
<protein>
    <recommendedName>
        <fullName>Triose phosphate/phosphate translocator, chloroplastic</fullName>
        <shortName>cTPT</shortName>
    </recommendedName>
</protein>
<organism>
    <name type="scientific">Zea mays</name>
    <name type="common">Maize</name>
    <dbReference type="NCBI Taxonomy" id="4577"/>
    <lineage>
        <taxon>Eukaryota</taxon>
        <taxon>Viridiplantae</taxon>
        <taxon>Streptophyta</taxon>
        <taxon>Embryophyta</taxon>
        <taxon>Tracheophyta</taxon>
        <taxon>Spermatophyta</taxon>
        <taxon>Magnoliopsida</taxon>
        <taxon>Liliopsida</taxon>
        <taxon>Poales</taxon>
        <taxon>Poaceae</taxon>
        <taxon>PACMAD clade</taxon>
        <taxon>Panicoideae</taxon>
        <taxon>Andropogonodae</taxon>
        <taxon>Andropogoneae</taxon>
        <taxon>Tripsacinae</taxon>
        <taxon>Zea</taxon>
    </lineage>
</organism>